<evidence type="ECO:0000255" key="1">
    <source>
        <dbReference type="HAMAP-Rule" id="MF_00171"/>
    </source>
</evidence>
<keyword id="KW-0413">Isomerase</keyword>
<keyword id="KW-1185">Reference proteome</keyword>
<keyword id="KW-0819">tRNA processing</keyword>
<name>TRUA_MYCPA</name>
<feature type="chain" id="PRO_0000057411" description="tRNA pseudouridine synthase A">
    <location>
        <begin position="1"/>
        <end position="251"/>
    </location>
</feature>
<feature type="active site" description="Nucleophile" evidence="1">
    <location>
        <position position="26"/>
    </location>
</feature>
<feature type="binding site" evidence="1">
    <location>
        <position position="98"/>
    </location>
    <ligand>
        <name>substrate</name>
    </ligand>
</feature>
<sequence length="251" mass="27674">MAGVLDEALTTVFRTPVRLRAAGRTDAGVHATGQVAHLDVPGTALPNAYPRAPHVGEAEFGPLLRRLGRFLPTDVRVVDITRAPAGFDARFSALRRHYVYRLSTAPWGVLPQQARYVTAWPRPLDVEAMAAASRDLLGLHDFAAFCRHRENATTIRDLQRLDWTRDGDLITARVSADAFCWSMVRSLVGALLAVGENRRPVSWCRELLSATNRSSDYATAPAHGLTLVGVDYPPDDQLAARNLITRDVRSR</sequence>
<dbReference type="EC" id="5.4.99.12" evidence="1"/>
<dbReference type="EMBL" id="AE016958">
    <property type="protein sequence ID" value="AAS06785.1"/>
    <property type="molecule type" value="Genomic_DNA"/>
</dbReference>
<dbReference type="SMR" id="Q73S41"/>
<dbReference type="STRING" id="262316.MAP_4235"/>
<dbReference type="KEGG" id="mpa:MAP_4235"/>
<dbReference type="eggNOG" id="COG0101">
    <property type="taxonomic scope" value="Bacteria"/>
</dbReference>
<dbReference type="HOGENOM" id="CLU_014673_0_2_11"/>
<dbReference type="Proteomes" id="UP000000580">
    <property type="component" value="Chromosome"/>
</dbReference>
<dbReference type="GO" id="GO:0003723">
    <property type="term" value="F:RNA binding"/>
    <property type="evidence" value="ECO:0007669"/>
    <property type="project" value="InterPro"/>
</dbReference>
<dbReference type="GO" id="GO:0160147">
    <property type="term" value="F:tRNA pseudouridine(38-40) synthase activity"/>
    <property type="evidence" value="ECO:0007669"/>
    <property type="project" value="UniProtKB-EC"/>
</dbReference>
<dbReference type="GO" id="GO:0031119">
    <property type="term" value="P:tRNA pseudouridine synthesis"/>
    <property type="evidence" value="ECO:0007669"/>
    <property type="project" value="UniProtKB-UniRule"/>
</dbReference>
<dbReference type="CDD" id="cd02570">
    <property type="entry name" value="PseudoU_synth_EcTruA"/>
    <property type="match status" value="1"/>
</dbReference>
<dbReference type="FunFam" id="3.30.70.660:FF:000003">
    <property type="entry name" value="tRNA pseudouridine synthase A"/>
    <property type="match status" value="1"/>
</dbReference>
<dbReference type="Gene3D" id="3.30.70.660">
    <property type="entry name" value="Pseudouridine synthase I, catalytic domain, C-terminal subdomain"/>
    <property type="match status" value="1"/>
</dbReference>
<dbReference type="Gene3D" id="3.30.70.580">
    <property type="entry name" value="Pseudouridine synthase I, catalytic domain, N-terminal subdomain"/>
    <property type="match status" value="1"/>
</dbReference>
<dbReference type="HAMAP" id="MF_00171">
    <property type="entry name" value="TruA"/>
    <property type="match status" value="1"/>
</dbReference>
<dbReference type="InterPro" id="IPR020103">
    <property type="entry name" value="PsdUridine_synth_cat_dom_sf"/>
</dbReference>
<dbReference type="InterPro" id="IPR001406">
    <property type="entry name" value="PsdUridine_synth_TruA"/>
</dbReference>
<dbReference type="InterPro" id="IPR020097">
    <property type="entry name" value="PsdUridine_synth_TruA_a/b_dom"/>
</dbReference>
<dbReference type="InterPro" id="IPR020095">
    <property type="entry name" value="PsdUridine_synth_TruA_C"/>
</dbReference>
<dbReference type="InterPro" id="IPR020094">
    <property type="entry name" value="TruA/RsuA/RluB/E/F_N"/>
</dbReference>
<dbReference type="PANTHER" id="PTHR11142">
    <property type="entry name" value="PSEUDOURIDYLATE SYNTHASE"/>
    <property type="match status" value="1"/>
</dbReference>
<dbReference type="PANTHER" id="PTHR11142:SF0">
    <property type="entry name" value="TRNA PSEUDOURIDINE SYNTHASE-LIKE 1"/>
    <property type="match status" value="1"/>
</dbReference>
<dbReference type="Pfam" id="PF01416">
    <property type="entry name" value="PseudoU_synth_1"/>
    <property type="match status" value="1"/>
</dbReference>
<dbReference type="PIRSF" id="PIRSF001430">
    <property type="entry name" value="tRNA_psdUrid_synth"/>
    <property type="match status" value="1"/>
</dbReference>
<dbReference type="SUPFAM" id="SSF55120">
    <property type="entry name" value="Pseudouridine synthase"/>
    <property type="match status" value="1"/>
</dbReference>
<organism>
    <name type="scientific">Mycolicibacterium paratuberculosis (strain ATCC BAA-968 / K-10)</name>
    <name type="common">Mycobacterium paratuberculosis</name>
    <dbReference type="NCBI Taxonomy" id="262316"/>
    <lineage>
        <taxon>Bacteria</taxon>
        <taxon>Bacillati</taxon>
        <taxon>Actinomycetota</taxon>
        <taxon>Actinomycetes</taxon>
        <taxon>Mycobacteriales</taxon>
        <taxon>Mycobacteriaceae</taxon>
        <taxon>Mycobacterium</taxon>
        <taxon>Mycobacterium avium complex (MAC)</taxon>
    </lineage>
</organism>
<reference key="1">
    <citation type="journal article" date="2005" name="Proc. Natl. Acad. Sci. U.S.A.">
        <title>The complete genome sequence of Mycobacterium avium subspecies paratuberculosis.</title>
        <authorList>
            <person name="Li L."/>
            <person name="Bannantine J.P."/>
            <person name="Zhang Q."/>
            <person name="Amonsin A."/>
            <person name="May B.J."/>
            <person name="Alt D."/>
            <person name="Banerji N."/>
            <person name="Kanjilal S."/>
            <person name="Kapur V."/>
        </authorList>
    </citation>
    <scope>NUCLEOTIDE SEQUENCE [LARGE SCALE GENOMIC DNA]</scope>
    <source>
        <strain>ATCC BAA-968 / K-10</strain>
    </source>
</reference>
<proteinExistence type="inferred from homology"/>
<protein>
    <recommendedName>
        <fullName evidence="1">tRNA pseudouridine synthase A</fullName>
        <ecNumber evidence="1">5.4.99.12</ecNumber>
    </recommendedName>
    <alternativeName>
        <fullName evidence="1">tRNA pseudouridine(38-40) synthase</fullName>
    </alternativeName>
    <alternativeName>
        <fullName evidence="1">tRNA pseudouridylate synthase I</fullName>
    </alternativeName>
    <alternativeName>
        <fullName evidence="1">tRNA-uridine isomerase I</fullName>
    </alternativeName>
</protein>
<accession>Q73S41</accession>
<gene>
    <name evidence="1" type="primary">truA</name>
    <name type="ordered locus">MAP_4235</name>
</gene>
<comment type="function">
    <text evidence="1">Formation of pseudouridine at positions 38, 39 and 40 in the anticodon stem and loop of transfer RNAs.</text>
</comment>
<comment type="catalytic activity">
    <reaction evidence="1">
        <text>uridine(38/39/40) in tRNA = pseudouridine(38/39/40) in tRNA</text>
        <dbReference type="Rhea" id="RHEA:22376"/>
        <dbReference type="Rhea" id="RHEA-COMP:10085"/>
        <dbReference type="Rhea" id="RHEA-COMP:10087"/>
        <dbReference type="ChEBI" id="CHEBI:65314"/>
        <dbReference type="ChEBI" id="CHEBI:65315"/>
        <dbReference type="EC" id="5.4.99.12"/>
    </reaction>
</comment>
<comment type="subunit">
    <text evidence="1">Homodimer.</text>
</comment>
<comment type="similarity">
    <text evidence="1">Belongs to the tRNA pseudouridine synthase TruA family.</text>
</comment>